<name>Y045_CAUSK</name>
<comment type="cofactor">
    <cofactor evidence="1">
        <name>Fe(2+)</name>
        <dbReference type="ChEBI" id="CHEBI:29033"/>
    </cofactor>
    <text evidence="1">Binds 1 Fe(2+) ion per subunit.</text>
</comment>
<comment type="cofactor">
    <cofactor evidence="1">
        <name>L-ascorbate</name>
        <dbReference type="ChEBI" id="CHEBI:38290"/>
    </cofactor>
</comment>
<organism>
    <name type="scientific">Caulobacter sp. (strain K31)</name>
    <dbReference type="NCBI Taxonomy" id="366602"/>
    <lineage>
        <taxon>Bacteria</taxon>
        <taxon>Pseudomonadati</taxon>
        <taxon>Pseudomonadota</taxon>
        <taxon>Alphaproteobacteria</taxon>
        <taxon>Caulobacterales</taxon>
        <taxon>Caulobacteraceae</taxon>
        <taxon>Caulobacter</taxon>
    </lineage>
</organism>
<feature type="chain" id="PRO_1000082788" description="PKHD-type hydroxylase Caul_0045">
    <location>
        <begin position="1"/>
        <end position="227"/>
    </location>
</feature>
<feature type="domain" description="Fe2OG dioxygenase" evidence="1">
    <location>
        <begin position="78"/>
        <end position="178"/>
    </location>
</feature>
<feature type="binding site" evidence="1">
    <location>
        <position position="96"/>
    </location>
    <ligand>
        <name>Fe cation</name>
        <dbReference type="ChEBI" id="CHEBI:24875"/>
    </ligand>
</feature>
<feature type="binding site" evidence="1">
    <location>
        <position position="98"/>
    </location>
    <ligand>
        <name>Fe cation</name>
        <dbReference type="ChEBI" id="CHEBI:24875"/>
    </ligand>
</feature>
<feature type="binding site" evidence="1">
    <location>
        <position position="159"/>
    </location>
    <ligand>
        <name>Fe cation</name>
        <dbReference type="ChEBI" id="CHEBI:24875"/>
    </ligand>
</feature>
<feature type="binding site" evidence="1">
    <location>
        <position position="169"/>
    </location>
    <ligand>
        <name>2-oxoglutarate</name>
        <dbReference type="ChEBI" id="CHEBI:16810"/>
    </ligand>
</feature>
<protein>
    <recommendedName>
        <fullName evidence="1">PKHD-type hydroxylase Caul_0045</fullName>
        <ecNumber evidence="1">1.14.11.-</ecNumber>
    </recommendedName>
</protein>
<proteinExistence type="inferred from homology"/>
<evidence type="ECO:0000255" key="1">
    <source>
        <dbReference type="HAMAP-Rule" id="MF_00657"/>
    </source>
</evidence>
<reference key="1">
    <citation type="submission" date="2008-01" db="EMBL/GenBank/DDBJ databases">
        <title>Complete sequence of chromosome of Caulobacter sp. K31.</title>
        <authorList>
            <consortium name="US DOE Joint Genome Institute"/>
            <person name="Copeland A."/>
            <person name="Lucas S."/>
            <person name="Lapidus A."/>
            <person name="Barry K."/>
            <person name="Glavina del Rio T."/>
            <person name="Dalin E."/>
            <person name="Tice H."/>
            <person name="Pitluck S."/>
            <person name="Bruce D."/>
            <person name="Goodwin L."/>
            <person name="Thompson L.S."/>
            <person name="Brettin T."/>
            <person name="Detter J.C."/>
            <person name="Han C."/>
            <person name="Schmutz J."/>
            <person name="Larimer F."/>
            <person name="Land M."/>
            <person name="Hauser L."/>
            <person name="Kyrpides N."/>
            <person name="Kim E."/>
            <person name="Stephens C."/>
            <person name="Richardson P."/>
        </authorList>
    </citation>
    <scope>NUCLEOTIDE SEQUENCE [LARGE SCALE GENOMIC DNA]</scope>
    <source>
        <strain>K31</strain>
    </source>
</reference>
<accession>B0T179</accession>
<keyword id="KW-0223">Dioxygenase</keyword>
<keyword id="KW-0408">Iron</keyword>
<keyword id="KW-0479">Metal-binding</keyword>
<keyword id="KW-0560">Oxidoreductase</keyword>
<keyword id="KW-0847">Vitamin C</keyword>
<sequence length="227" mass="24371">MMLQIPDVLTSDEAAYCRGVLDAAPWVDGNVTSGFQAAMAKNNQQLPQDGAAAREIGAIIVQALNANPLFVSAALPRTILSPLFNRYGVGMGFGDHVDNSVRRDPVTGQTLRTDLSITVFLSDPDDYDGGELVVEDAYGSHLVKLAAGAAILYPASSLHHVTEVTRGVRTASFFWIQSLVRDDAKRGLLLDMDVAIQRLSGAVGTTDPSVLSLTGTYHNLLRMWAEV</sequence>
<gene>
    <name type="ordered locus">Caul_0045</name>
</gene>
<dbReference type="EC" id="1.14.11.-" evidence="1"/>
<dbReference type="EMBL" id="CP000927">
    <property type="protein sequence ID" value="ABZ69183.1"/>
    <property type="molecule type" value="Genomic_DNA"/>
</dbReference>
<dbReference type="SMR" id="B0T179"/>
<dbReference type="STRING" id="366602.Caul_0045"/>
<dbReference type="KEGG" id="cak:Caul_0045"/>
<dbReference type="eggNOG" id="COG3128">
    <property type="taxonomic scope" value="Bacteria"/>
</dbReference>
<dbReference type="HOGENOM" id="CLU_106663_0_0_5"/>
<dbReference type="OrthoDB" id="9812472at2"/>
<dbReference type="GO" id="GO:0016706">
    <property type="term" value="F:2-oxoglutarate-dependent dioxygenase activity"/>
    <property type="evidence" value="ECO:0007669"/>
    <property type="project" value="UniProtKB-UniRule"/>
</dbReference>
<dbReference type="GO" id="GO:0005506">
    <property type="term" value="F:iron ion binding"/>
    <property type="evidence" value="ECO:0007669"/>
    <property type="project" value="UniProtKB-UniRule"/>
</dbReference>
<dbReference type="GO" id="GO:0031418">
    <property type="term" value="F:L-ascorbic acid binding"/>
    <property type="evidence" value="ECO:0007669"/>
    <property type="project" value="UniProtKB-KW"/>
</dbReference>
<dbReference type="GO" id="GO:0006974">
    <property type="term" value="P:DNA damage response"/>
    <property type="evidence" value="ECO:0007669"/>
    <property type="project" value="TreeGrafter"/>
</dbReference>
<dbReference type="GO" id="GO:0006879">
    <property type="term" value="P:intracellular iron ion homeostasis"/>
    <property type="evidence" value="ECO:0007669"/>
    <property type="project" value="TreeGrafter"/>
</dbReference>
<dbReference type="Gene3D" id="2.60.120.620">
    <property type="entry name" value="q2cbj1_9rhob like domain"/>
    <property type="match status" value="1"/>
</dbReference>
<dbReference type="Gene3D" id="4.10.860.20">
    <property type="entry name" value="Rabenosyn, Rab binding domain"/>
    <property type="match status" value="1"/>
</dbReference>
<dbReference type="HAMAP" id="MF_00657">
    <property type="entry name" value="Hydroxyl_YbiX"/>
    <property type="match status" value="1"/>
</dbReference>
<dbReference type="InterPro" id="IPR005123">
    <property type="entry name" value="Oxoglu/Fe-dep_dioxygenase_dom"/>
</dbReference>
<dbReference type="InterPro" id="IPR041097">
    <property type="entry name" value="PKHD_C"/>
</dbReference>
<dbReference type="InterPro" id="IPR023550">
    <property type="entry name" value="PKHD_hydroxylase"/>
</dbReference>
<dbReference type="InterPro" id="IPR006620">
    <property type="entry name" value="Pro_4_hyd_alph"/>
</dbReference>
<dbReference type="InterPro" id="IPR044862">
    <property type="entry name" value="Pro_4_hyd_alph_FE2OG_OXY"/>
</dbReference>
<dbReference type="NCBIfam" id="NF003973">
    <property type="entry name" value="PRK05467.1-2"/>
    <property type="match status" value="1"/>
</dbReference>
<dbReference type="NCBIfam" id="NF003974">
    <property type="entry name" value="PRK05467.1-3"/>
    <property type="match status" value="1"/>
</dbReference>
<dbReference type="NCBIfam" id="NF003975">
    <property type="entry name" value="PRK05467.1-4"/>
    <property type="match status" value="1"/>
</dbReference>
<dbReference type="PANTHER" id="PTHR41536">
    <property type="entry name" value="PKHD-TYPE HYDROXYLASE YBIX"/>
    <property type="match status" value="1"/>
</dbReference>
<dbReference type="PANTHER" id="PTHR41536:SF1">
    <property type="entry name" value="PKHD-TYPE HYDROXYLASE YBIX"/>
    <property type="match status" value="1"/>
</dbReference>
<dbReference type="Pfam" id="PF13640">
    <property type="entry name" value="2OG-FeII_Oxy_3"/>
    <property type="match status" value="1"/>
</dbReference>
<dbReference type="Pfam" id="PF18331">
    <property type="entry name" value="PKHD_C"/>
    <property type="match status" value="1"/>
</dbReference>
<dbReference type="SMART" id="SM00702">
    <property type="entry name" value="P4Hc"/>
    <property type="match status" value="1"/>
</dbReference>
<dbReference type="PROSITE" id="PS51471">
    <property type="entry name" value="FE2OG_OXY"/>
    <property type="match status" value="1"/>
</dbReference>